<gene>
    <name evidence="7" type="primary">EO</name>
</gene>
<keyword id="KW-0274">FAD</keyword>
<keyword id="KW-0285">Flavoprotein</keyword>
<keyword id="KW-0560">Oxidoreductase</keyword>
<keyword id="KW-1185">Reference proteome</keyword>
<accession>H6AGY0</accession>
<evidence type="ECO:0000250" key="1">
    <source>
        <dbReference type="UniProtKB" id="E4QP00"/>
    </source>
</evidence>
<evidence type="ECO:0000255" key="2">
    <source>
        <dbReference type="PIRSR" id="PIRSR000137-2"/>
    </source>
</evidence>
<evidence type="ECO:0000255" key="3">
    <source>
        <dbReference type="RuleBase" id="RU003968"/>
    </source>
</evidence>
<evidence type="ECO:0000269" key="4">
    <source>
    </source>
</evidence>
<evidence type="ECO:0000269" key="5">
    <source>
    </source>
</evidence>
<evidence type="ECO:0000269" key="6">
    <source>
    </source>
</evidence>
<evidence type="ECO:0000303" key="7">
    <source>
    </source>
</evidence>
<evidence type="ECO:0000305" key="8"/>
<evidence type="ECO:0000305" key="9">
    <source>
    </source>
</evidence>
<evidence type="ECO:0000305" key="10">
    <source>
    </source>
</evidence>
<evidence type="ECO:0000305" key="11">
    <source>
    </source>
</evidence>
<evidence type="ECO:0000312" key="12">
    <source>
        <dbReference type="EMBL" id="AEM17059.1"/>
    </source>
</evidence>
<evidence type="ECO:0000312" key="13">
    <source>
        <dbReference type="EMBL" id="AIO02855.1"/>
    </source>
</evidence>
<evidence type="ECO:0000312" key="14">
    <source>
        <dbReference type="EMBL" id="AIO02861.1"/>
    </source>
</evidence>
<evidence type="ECO:0000312" key="15">
    <source>
        <dbReference type="EMBL" id="AIO02864.1"/>
    </source>
</evidence>
<evidence type="ECO:0000312" key="16">
    <source>
        <dbReference type="EMBL" id="AIO02865.1"/>
    </source>
</evidence>
<evidence type="ECO:0000312" key="17">
    <source>
        <dbReference type="EMBL" id="AIO02867.1"/>
    </source>
</evidence>
<evidence type="ECO:0000312" key="18">
    <source>
        <dbReference type="EMBL" id="AIO02868.1"/>
    </source>
</evidence>
<evidence type="ECO:0000312" key="19">
    <source>
        <dbReference type="EMBL" id="AIO02870.1"/>
    </source>
</evidence>
<comment type="function">
    <text evidence="4 5 6">Involved in the inactivation of ecdysteroid molting hormones by converting ecdysteroids into 3-dehydroecdysteroids.</text>
</comment>
<comment type="catalytic activity">
    <reaction evidence="4 10 11">
        <text>ecdysone + O2 = 3-dehydroecdysone + H2O2</text>
        <dbReference type="Rhea" id="RHEA:11796"/>
        <dbReference type="ChEBI" id="CHEBI:15379"/>
        <dbReference type="ChEBI" id="CHEBI:16240"/>
        <dbReference type="ChEBI" id="CHEBI:16688"/>
        <dbReference type="ChEBI" id="CHEBI:17058"/>
        <dbReference type="EC" id="1.1.3.16"/>
    </reaction>
    <physiologicalReaction direction="left-to-right" evidence="9">
        <dbReference type="Rhea" id="RHEA:11797"/>
    </physiologicalReaction>
</comment>
<comment type="cofactor">
    <cofactor evidence="2">
        <name>FAD</name>
        <dbReference type="ChEBI" id="CHEBI:57692"/>
    </cofactor>
</comment>
<comment type="developmental stage">
    <text evidence="4 5 6">Expressed in the midgut goblet cell cavities at the 5th instar larval stage (at protein level) (PubMed:26041352). At the pupal stage, expressed in the midgut and to a lesser extent in the fat body, hemocyte, head and testis (PubMed:26041352, PubMed:30262999). At the pupal stage, highly expressed in ovary (PubMed:30262999). Expressed at the late 4th instar larval stage, and disappears during the 4th molting stage (PubMed:22215981). Highly expressed at the early 5th instar larval stage, then expression remains low during the feeding stage, and increases at the wandering stage (PubMed:22215981). During pupal development, expression begins at prepupal stage 1 (PP1), increases until P4 pupal stage, then decreases after P6 pupal stage (PubMed:26041352). During egg maturation, expressed at low level during the vitellogenic stages and increases at the onset of choriogenesis (PubMed:30262999).</text>
</comment>
<comment type="disruption phenotype">
    <text evidence="5 6">Causes large body size and prolongs the final instar larval stage (PubMed:26041352). In the midgut of instar larval stage (L5D4), causes an increase of ecdysteroid levels, up-regulation of IRS and PI3K mRNA levels and down-regulation of TSC1 and TSC2 mRNA levels (PubMed:26041352). RNAi-mediated knockdown at the pupal stage, does not affect growth or ovary development (PubMed:30262999). However, the ovary has decreased levels of 3-dehydroecdysone without affecting ecdysone levels (PubMed:30262999). Also, hatching rate is reduced and, laid eggs have lower levels of 20-hydroxyecdysone and are arrested at the organogenesis stage (PubMed:30262999).</text>
</comment>
<comment type="similarity">
    <text evidence="3">Belongs to the GMC oxidoreductase family.</text>
</comment>
<protein>
    <recommendedName>
        <fullName evidence="7">Ecdysone oxidase</fullName>
        <shortName evidence="7">BmEO</shortName>
        <ecNumber evidence="4 10 11">1.1.3.16</ecNumber>
    </recommendedName>
</protein>
<organism evidence="12">
    <name type="scientific">Bombyx mori</name>
    <name type="common">Silk moth</name>
    <dbReference type="NCBI Taxonomy" id="7091"/>
    <lineage>
        <taxon>Eukaryota</taxon>
        <taxon>Metazoa</taxon>
        <taxon>Ecdysozoa</taxon>
        <taxon>Arthropoda</taxon>
        <taxon>Hexapoda</taxon>
        <taxon>Insecta</taxon>
        <taxon>Pterygota</taxon>
        <taxon>Neoptera</taxon>
        <taxon>Endopterygota</taxon>
        <taxon>Lepidoptera</taxon>
        <taxon>Glossata</taxon>
        <taxon>Ditrysia</taxon>
        <taxon>Bombycoidea</taxon>
        <taxon>Bombycidae</taxon>
        <taxon>Bombycinae</taxon>
        <taxon>Bombyx</taxon>
    </lineage>
</organism>
<dbReference type="EC" id="1.1.3.16" evidence="4 10 11"/>
<dbReference type="EMBL" id="JF433972">
    <property type="protein sequence ID" value="AEM17059.1"/>
    <property type="molecule type" value="mRNA"/>
</dbReference>
<dbReference type="EMBL" id="KF717653">
    <property type="protein sequence ID" value="AIO02855.1"/>
    <property type="molecule type" value="Genomic_DNA"/>
</dbReference>
<dbReference type="EMBL" id="KF717659">
    <property type="protein sequence ID" value="AIO02861.1"/>
    <property type="molecule type" value="Genomic_DNA"/>
</dbReference>
<dbReference type="EMBL" id="KF717662">
    <property type="protein sequence ID" value="AIO02864.1"/>
    <property type="molecule type" value="Genomic_DNA"/>
</dbReference>
<dbReference type="EMBL" id="KF717663">
    <property type="protein sequence ID" value="AIO02865.1"/>
    <property type="molecule type" value="Genomic_DNA"/>
</dbReference>
<dbReference type="EMBL" id="KF717665">
    <property type="protein sequence ID" value="AIO02867.1"/>
    <property type="molecule type" value="Genomic_DNA"/>
</dbReference>
<dbReference type="EMBL" id="KF717666">
    <property type="protein sequence ID" value="AIO02868.1"/>
    <property type="molecule type" value="Genomic_DNA"/>
</dbReference>
<dbReference type="EMBL" id="KF717668">
    <property type="protein sequence ID" value="AIO02870.1"/>
    <property type="molecule type" value="Genomic_DNA"/>
</dbReference>
<dbReference type="RefSeq" id="NP_001243996.1">
    <property type="nucleotide sequence ID" value="NM_001257067.1"/>
</dbReference>
<dbReference type="RefSeq" id="XP_012545508.1">
    <property type="nucleotide sequence ID" value="XM_012690054.1"/>
</dbReference>
<dbReference type="SMR" id="H6AGY0"/>
<dbReference type="EnsemblMetazoa" id="NM_001257067.1">
    <property type="protein sequence ID" value="NP_001243996.1"/>
    <property type="gene ID" value="LOC100862708"/>
</dbReference>
<dbReference type="EnsemblMetazoa" id="XM_038016628.1">
    <property type="protein sequence ID" value="XP_037872556.1"/>
    <property type="gene ID" value="LOC100862708"/>
</dbReference>
<dbReference type="EnsemblMetazoa" id="XM_038016629.1">
    <property type="protein sequence ID" value="XP_037872557.1"/>
    <property type="gene ID" value="LOC100862708"/>
</dbReference>
<dbReference type="GeneID" id="100862708"/>
<dbReference type="KEGG" id="bmor:100862708"/>
<dbReference type="HOGENOM" id="CLU_970522_0_0_1"/>
<dbReference type="InParanoid" id="H6AGY0"/>
<dbReference type="BioCyc" id="MetaCyc:MONOMER-16688"/>
<dbReference type="BRENDA" id="1.1.3.16">
    <property type="organism ID" value="890"/>
</dbReference>
<dbReference type="Proteomes" id="UP000005204">
    <property type="component" value="Unassembled WGS sequence"/>
</dbReference>
<dbReference type="GO" id="GO:0050660">
    <property type="term" value="F:flavin adenine dinucleotide binding"/>
    <property type="evidence" value="ECO:0007669"/>
    <property type="project" value="InterPro"/>
</dbReference>
<dbReference type="GO" id="GO:0016614">
    <property type="term" value="F:oxidoreductase activity, acting on CH-OH group of donors"/>
    <property type="evidence" value="ECO:0007669"/>
    <property type="project" value="InterPro"/>
</dbReference>
<dbReference type="Gene3D" id="3.50.50.60">
    <property type="entry name" value="FAD/NAD(P)-binding domain"/>
    <property type="match status" value="1"/>
</dbReference>
<dbReference type="Gene3D" id="3.30.560.10">
    <property type="entry name" value="Glucose Oxidase, domain 3"/>
    <property type="match status" value="1"/>
</dbReference>
<dbReference type="InterPro" id="IPR036188">
    <property type="entry name" value="FAD/NAD-bd_sf"/>
</dbReference>
<dbReference type="InterPro" id="IPR012132">
    <property type="entry name" value="GMC_OxRdtase"/>
</dbReference>
<dbReference type="InterPro" id="IPR000172">
    <property type="entry name" value="GMC_OxRdtase_N"/>
</dbReference>
<dbReference type="InterPro" id="IPR007867">
    <property type="entry name" value="GMC_OxRtase_C"/>
</dbReference>
<dbReference type="PANTHER" id="PTHR11552:SF147">
    <property type="entry name" value="CHOLINE DEHYDROGENASE, MITOCHONDRIAL"/>
    <property type="match status" value="1"/>
</dbReference>
<dbReference type="PANTHER" id="PTHR11552">
    <property type="entry name" value="GLUCOSE-METHANOL-CHOLINE GMC OXIDOREDUCTASE"/>
    <property type="match status" value="1"/>
</dbReference>
<dbReference type="Pfam" id="PF05199">
    <property type="entry name" value="GMC_oxred_C"/>
    <property type="match status" value="1"/>
</dbReference>
<dbReference type="Pfam" id="PF00732">
    <property type="entry name" value="GMC_oxred_N"/>
    <property type="match status" value="1"/>
</dbReference>
<dbReference type="PIRSF" id="PIRSF000137">
    <property type="entry name" value="Alcohol_oxidase"/>
    <property type="match status" value="1"/>
</dbReference>
<dbReference type="SUPFAM" id="SSF54373">
    <property type="entry name" value="FAD-linked reductases, C-terminal domain"/>
    <property type="match status" value="1"/>
</dbReference>
<dbReference type="SUPFAM" id="SSF51905">
    <property type="entry name" value="FAD/NAD(P)-binding domain"/>
    <property type="match status" value="1"/>
</dbReference>
<dbReference type="PROSITE" id="PS00623">
    <property type="entry name" value="GMC_OXRED_1"/>
    <property type="match status" value="1"/>
</dbReference>
<dbReference type="PROSITE" id="PS00624">
    <property type="entry name" value="GMC_OXRED_2"/>
    <property type="match status" value="1"/>
</dbReference>
<name>EO_BOMMO</name>
<reference evidence="12" key="1">
    <citation type="journal article" date="2012" name="Int. J. Biol. Sci.">
        <title>Molecular cloning and characterization of Ecdysone oxidase and 3-dehydroecdysone-3alpha-reductase involved in the ecdysone inactivation pathway of silkworm, Bombyx mori.</title>
        <authorList>
            <person name="Sun W."/>
            <person name="Shen Y.H."/>
            <person name="Qi D.W."/>
            <person name="Xiang Z.H."/>
            <person name="Zhang Z."/>
        </authorList>
    </citation>
    <scope>NUCLEOTIDE SEQUENCE [MRNA]</scope>
    <scope>FUNCTION</scope>
    <scope>CATALYTIC ACTIVITY</scope>
    <scope>DEVELOPMENTAL STAGE</scope>
</reference>
<reference evidence="13" key="2">
    <citation type="journal article" date="2014" name="Mol. Biol. Evol.">
        <title>An adaptive transposable element insertion in the regulatory region of the EO gene in the domesticated silkworm, Bombyx mori.</title>
        <authorList>
            <person name="Sun W."/>
            <person name="Shen Y.H."/>
            <person name="Han M.J."/>
            <person name="Cao Y.F."/>
            <person name="Zhang Z."/>
        </authorList>
    </citation>
    <scope>NUCLEOTIDE SEQUENCE [GENOMIC DNA]</scope>
    <source>
        <strain evidence="19">D872</strain>
        <strain evidence="14">Dongting</strain>
        <strain evidence="16">Furonghuiluan</strain>
        <strain evidence="17">Luoni6</strain>
        <strain evidence="18">Ping</strain>
        <strain evidence="15">Sulian1</strain>
        <strain evidence="13">WuG</strain>
    </source>
</reference>
<reference evidence="8" key="3">
    <citation type="journal article" date="2015" name="Proc. R. Soc. B">
        <title>Ectopic expression of ecdysone oxidase impairs tissue degeneration in Bombyx mori.</title>
        <authorList>
            <person name="Li Z."/>
            <person name="You L."/>
            <person name="Zeng B."/>
            <person name="Ling L."/>
            <person name="Xu J."/>
            <person name="Chen X."/>
            <person name="Zhang Z."/>
            <person name="Palli S.R."/>
            <person name="Huang Y."/>
            <person name="Tan A."/>
        </authorList>
    </citation>
    <scope>FUNCTION</scope>
    <scope>CATALYTIC ACTIVITY</scope>
    <scope>DEVELOPMENTAL STAGE</scope>
    <scope>DISRUPTION PHENOTYPE</scope>
</reference>
<reference evidence="8" key="4">
    <citation type="journal article" date="2018" name="Int. J. Biol. Sci.">
        <title>Ecdysone oxidase and 3-dehydroecdysone-3beta-reductase contribute to the synthesis of ecdysone during early embryonic development of the silkworm.</title>
        <authorList>
            <person name="Wang C.F."/>
            <person name="Zhang Z."/>
            <person name="Sun W."/>
        </authorList>
    </citation>
    <scope>FUNCTION</scope>
    <scope>CATALYTIC ACTIVITY</scope>
    <scope>DEVELOPMENTAL STAGE</scope>
    <scope>DISRUPTION PHENOTYPE</scope>
</reference>
<sequence length="668" mass="72596">MVCGLTSCLGSGAAGGLFSSAVQFFAATQCLVGETWPKDSVLQNGSRYDFIIVGAGTAGSALAARLSEVANFSVLLLEAGGDPPIEAIIPAFRETLKASSVDWNFTSVENNITSQALKRGIEQQPRGKMLGGSGSLNHMVYARGFPSDYHEWASIAGETWNWTNVLKYFMKTEHMTDTNIVNNPELMVYHGRGGAIEVSGTNEVMFSIKKFLQAFEELGFKTVPDMTYPNSIGAGCFSHTIRNGERDSSLRALLNNANSTSLHILKDTFVTKIIIENGTAIGIEAVKDDKTFLFYADREVILSAGTFNTPKLLMLSGVGRSEHLRSLGIDVVADLPVGSNLHDHAMVLAFLVADNGTCVSDEAENSMEAIKYLYDRTGFLAKADNMAAYLPLSSSEPTVPEFALYPTCIPQFSPFRSGCLTLGLNEDLCTELHNLNQEYELVTIAAVLLKPKSRGKVELNSINPFDDPLIYAGTFSEEQDLDHFPRLIKMAWSIADTNYFRSKNARVIKPWVEACSNLTESAWIKCMSRAMVTSAWHSVGTAAMGTVVDGDLKVLGINGLRVVDASVMPKIIRGNTNAPVVMIAEIAADLIKEHYSVSRTGTNLNNMTIGNLTASSMPNISQPNINLADVIENNDMINSSLIEVEITNVEIITTTDRQSDIDDTVNVA</sequence>
<proteinExistence type="evidence at protein level"/>
<feature type="chain" id="PRO_0000454217" description="Ecdysone oxidase">
    <location>
        <begin position="1"/>
        <end position="668"/>
    </location>
</feature>
<feature type="active site" description="Proton acceptor" evidence="1">
    <location>
        <position position="537"/>
    </location>
</feature>
<feature type="binding site" evidence="2">
    <location>
        <begin position="137"/>
        <end position="140"/>
    </location>
    <ligand>
        <name>FAD</name>
        <dbReference type="ChEBI" id="CHEBI:57692"/>
    </ligand>
</feature>
<feature type="binding site" evidence="2">
    <location>
        <position position="270"/>
    </location>
    <ligand>
        <name>FAD</name>
        <dbReference type="ChEBI" id="CHEBI:57692"/>
    </ligand>
</feature>
<feature type="binding site" evidence="2">
    <location>
        <begin position="536"/>
        <end position="537"/>
    </location>
    <ligand>
        <name>FAD</name>
        <dbReference type="ChEBI" id="CHEBI:57692"/>
    </ligand>
</feature>